<gene>
    <name type="primary">srrB</name>
    <name type="ordered locus">SACOL1534</name>
</gene>
<organism>
    <name type="scientific">Staphylococcus aureus (strain COL)</name>
    <dbReference type="NCBI Taxonomy" id="93062"/>
    <lineage>
        <taxon>Bacteria</taxon>
        <taxon>Bacillati</taxon>
        <taxon>Bacillota</taxon>
        <taxon>Bacilli</taxon>
        <taxon>Bacillales</taxon>
        <taxon>Staphylococcaceae</taxon>
        <taxon>Staphylococcus</taxon>
    </lineage>
</organism>
<evidence type="ECO:0000250" key="1"/>
<evidence type="ECO:0000255" key="2"/>
<evidence type="ECO:0000255" key="3">
    <source>
        <dbReference type="PROSITE-ProRule" id="PRU00102"/>
    </source>
</evidence>
<evidence type="ECO:0000255" key="4">
    <source>
        <dbReference type="PROSITE-ProRule" id="PRU00107"/>
    </source>
</evidence>
<evidence type="ECO:0000269" key="5">
    <source>
    </source>
</evidence>
<evidence type="ECO:0000269" key="6">
    <source>
    </source>
</evidence>
<evidence type="ECO:0000269" key="7">
    <source>
    </source>
</evidence>
<evidence type="ECO:0000305" key="8"/>
<accession>Q5HFT1</accession>
<keyword id="KW-0067">ATP-binding</keyword>
<keyword id="KW-1003">Cell membrane</keyword>
<keyword id="KW-0418">Kinase</keyword>
<keyword id="KW-0472">Membrane</keyword>
<keyword id="KW-0547">Nucleotide-binding</keyword>
<keyword id="KW-0597">Phosphoprotein</keyword>
<keyword id="KW-0808">Transferase</keyword>
<keyword id="KW-0812">Transmembrane</keyword>
<keyword id="KW-1133">Transmembrane helix</keyword>
<keyword id="KW-0902">Two-component regulatory system</keyword>
<protein>
    <recommendedName>
        <fullName>Sensor protein SrrB</fullName>
        <ecNumber>2.7.13.3</ecNumber>
    </recommendedName>
    <alternativeName>
        <fullName>Staphylococcal respiratory response protein B</fullName>
    </alternativeName>
</protein>
<proteinExistence type="evidence at transcript level"/>
<name>SRRB_STAAC</name>
<reference key="1">
    <citation type="journal article" date="2005" name="J. Bacteriol.">
        <title>Insights on evolution of virulence and resistance from the complete genome analysis of an early methicillin-resistant Staphylococcus aureus strain and a biofilm-producing methicillin-resistant Staphylococcus epidermidis strain.</title>
        <authorList>
            <person name="Gill S.R."/>
            <person name="Fouts D.E."/>
            <person name="Archer G.L."/>
            <person name="Mongodin E.F."/>
            <person name="DeBoy R.T."/>
            <person name="Ravel J."/>
            <person name="Paulsen I.T."/>
            <person name="Kolonay J.F."/>
            <person name="Brinkac L.M."/>
            <person name="Beanan M.J."/>
            <person name="Dodson R.J."/>
            <person name="Daugherty S.C."/>
            <person name="Madupu R."/>
            <person name="Angiuoli S.V."/>
            <person name="Durkin A.S."/>
            <person name="Haft D.H."/>
            <person name="Vamathevan J.J."/>
            <person name="Khouri H."/>
            <person name="Utterback T.R."/>
            <person name="Lee C."/>
            <person name="Dimitrov G."/>
            <person name="Jiang L."/>
            <person name="Qin H."/>
            <person name="Weidman J."/>
            <person name="Tran K."/>
            <person name="Kang K.H."/>
            <person name="Hance I.R."/>
            <person name="Nelson K.E."/>
            <person name="Fraser C.M."/>
        </authorList>
    </citation>
    <scope>NUCLEOTIDE SEQUENCE [LARGE SCALE GENOMIC DNA]</scope>
    <source>
        <strain>COL</strain>
    </source>
</reference>
<reference key="2">
    <citation type="journal article" date="2006" name="Mol. Microbiol.">
        <title>The nitrosative stress response of Staphylococcus aureus is required for resistance to innate immunity.</title>
        <authorList>
            <person name="Richardson A.R."/>
            <person name="Dunman P.M."/>
            <person name="Fang F.C."/>
        </authorList>
    </citation>
    <scope>FUNCTION</scope>
    <scope>DISRUPTION PHENOTYPE</scope>
</reference>
<reference key="3">
    <citation type="journal article" date="2007" name="J. Bacteriol.">
        <title>Anaerobic gene expression in Staphylococcus aureus.</title>
        <authorList>
            <person name="Fuchs S."/>
            <person name="Pane-Farre J."/>
            <person name="Kohler C."/>
            <person name="Hecker M."/>
            <person name="Engelmann S."/>
        </authorList>
    </citation>
    <scope>INDUCTION DURING ANAEROBIC GROWTH</scope>
</reference>
<reference key="4">
    <citation type="journal article" date="2013" name="MBio">
        <title>The Staphylococcus aureus SrrAB two-component system promotes resistance to nitrosative stress and hypoxia.</title>
        <authorList>
            <person name="Kinkel T.L."/>
            <person name="Roux C.M."/>
            <person name="Dunman P.M."/>
            <person name="Fang F.C."/>
        </authorList>
    </citation>
    <scope>FUNCTION</scope>
    <scope>DISRUPTION PHENOTYPE</scope>
</reference>
<dbReference type="EC" id="2.7.13.3"/>
<dbReference type="EMBL" id="CP000046">
    <property type="protein sequence ID" value="AAW36727.1"/>
    <property type="molecule type" value="Genomic_DNA"/>
</dbReference>
<dbReference type="RefSeq" id="WP_000987769.1">
    <property type="nucleotide sequence ID" value="NZ_JBGOFO010000003.1"/>
</dbReference>
<dbReference type="SMR" id="Q5HFT1"/>
<dbReference type="KEGG" id="sac:SACOL1534"/>
<dbReference type="HOGENOM" id="CLU_000445_89_2_9"/>
<dbReference type="PHI-base" id="PHI:10535"/>
<dbReference type="Proteomes" id="UP000000530">
    <property type="component" value="Chromosome"/>
</dbReference>
<dbReference type="GO" id="GO:0005886">
    <property type="term" value="C:plasma membrane"/>
    <property type="evidence" value="ECO:0007669"/>
    <property type="project" value="UniProtKB-SubCell"/>
</dbReference>
<dbReference type="GO" id="GO:0005524">
    <property type="term" value="F:ATP binding"/>
    <property type="evidence" value="ECO:0007669"/>
    <property type="project" value="UniProtKB-KW"/>
</dbReference>
<dbReference type="GO" id="GO:0000156">
    <property type="term" value="F:phosphorelay response regulator activity"/>
    <property type="evidence" value="ECO:0007669"/>
    <property type="project" value="TreeGrafter"/>
</dbReference>
<dbReference type="GO" id="GO:0000155">
    <property type="term" value="F:phosphorelay sensor kinase activity"/>
    <property type="evidence" value="ECO:0007669"/>
    <property type="project" value="InterPro"/>
</dbReference>
<dbReference type="GO" id="GO:0030295">
    <property type="term" value="F:protein kinase activator activity"/>
    <property type="evidence" value="ECO:0007669"/>
    <property type="project" value="TreeGrafter"/>
</dbReference>
<dbReference type="GO" id="GO:0007234">
    <property type="term" value="P:osmosensory signaling via phosphorelay pathway"/>
    <property type="evidence" value="ECO:0007669"/>
    <property type="project" value="TreeGrafter"/>
</dbReference>
<dbReference type="CDD" id="cd06225">
    <property type="entry name" value="HAMP"/>
    <property type="match status" value="1"/>
</dbReference>
<dbReference type="CDD" id="cd00075">
    <property type="entry name" value="HATPase"/>
    <property type="match status" value="1"/>
</dbReference>
<dbReference type="CDD" id="cd00082">
    <property type="entry name" value="HisKA"/>
    <property type="match status" value="1"/>
</dbReference>
<dbReference type="FunFam" id="3.30.565.10:FF:000006">
    <property type="entry name" value="Sensor histidine kinase WalK"/>
    <property type="match status" value="1"/>
</dbReference>
<dbReference type="FunFam" id="1.10.287.130:FF:000001">
    <property type="entry name" value="Two-component sensor histidine kinase"/>
    <property type="match status" value="1"/>
</dbReference>
<dbReference type="Gene3D" id="1.10.287.130">
    <property type="match status" value="1"/>
</dbReference>
<dbReference type="Gene3D" id="6.10.340.10">
    <property type="match status" value="1"/>
</dbReference>
<dbReference type="Gene3D" id="3.30.565.10">
    <property type="entry name" value="Histidine kinase-like ATPase, C-terminal domain"/>
    <property type="match status" value="1"/>
</dbReference>
<dbReference type="InterPro" id="IPR003660">
    <property type="entry name" value="HAMP_dom"/>
</dbReference>
<dbReference type="InterPro" id="IPR036890">
    <property type="entry name" value="HATPase_C_sf"/>
</dbReference>
<dbReference type="InterPro" id="IPR005467">
    <property type="entry name" value="His_kinase_dom"/>
</dbReference>
<dbReference type="InterPro" id="IPR003661">
    <property type="entry name" value="HisK_dim/P_dom"/>
</dbReference>
<dbReference type="InterPro" id="IPR036097">
    <property type="entry name" value="HisK_dim/P_sf"/>
</dbReference>
<dbReference type="InterPro" id="IPR041328">
    <property type="entry name" value="HisK_sensor"/>
</dbReference>
<dbReference type="InterPro" id="IPR052545">
    <property type="entry name" value="Light-responsive_reg"/>
</dbReference>
<dbReference type="InterPro" id="IPR004358">
    <property type="entry name" value="Sig_transdc_His_kin-like_C"/>
</dbReference>
<dbReference type="PANTHER" id="PTHR42878:SF3">
    <property type="entry name" value="HISTIDINE PROTEIN KINASE SAES"/>
    <property type="match status" value="1"/>
</dbReference>
<dbReference type="PANTHER" id="PTHR42878">
    <property type="entry name" value="TWO-COMPONENT HISTIDINE KINASE"/>
    <property type="match status" value="1"/>
</dbReference>
<dbReference type="Pfam" id="PF00672">
    <property type="entry name" value="HAMP"/>
    <property type="match status" value="1"/>
</dbReference>
<dbReference type="Pfam" id="PF02518">
    <property type="entry name" value="HATPase_c"/>
    <property type="match status" value="1"/>
</dbReference>
<dbReference type="Pfam" id="PF18698">
    <property type="entry name" value="HisK_sensor"/>
    <property type="match status" value="1"/>
</dbReference>
<dbReference type="Pfam" id="PF00512">
    <property type="entry name" value="HisKA"/>
    <property type="match status" value="1"/>
</dbReference>
<dbReference type="PRINTS" id="PR00344">
    <property type="entry name" value="BCTRLSENSOR"/>
</dbReference>
<dbReference type="SMART" id="SM00304">
    <property type="entry name" value="HAMP"/>
    <property type="match status" value="1"/>
</dbReference>
<dbReference type="SMART" id="SM00387">
    <property type="entry name" value="HATPase_c"/>
    <property type="match status" value="1"/>
</dbReference>
<dbReference type="SMART" id="SM00388">
    <property type="entry name" value="HisKA"/>
    <property type="match status" value="1"/>
</dbReference>
<dbReference type="SUPFAM" id="SSF55874">
    <property type="entry name" value="ATPase domain of HSP90 chaperone/DNA topoisomerase II/histidine kinase"/>
    <property type="match status" value="1"/>
</dbReference>
<dbReference type="SUPFAM" id="SSF158472">
    <property type="entry name" value="HAMP domain-like"/>
    <property type="match status" value="1"/>
</dbReference>
<dbReference type="SUPFAM" id="SSF47384">
    <property type="entry name" value="Homodimeric domain of signal transducing histidine kinase"/>
    <property type="match status" value="1"/>
</dbReference>
<dbReference type="PROSITE" id="PS50885">
    <property type="entry name" value="HAMP"/>
    <property type="match status" value="1"/>
</dbReference>
<dbReference type="PROSITE" id="PS50109">
    <property type="entry name" value="HIS_KIN"/>
    <property type="match status" value="1"/>
</dbReference>
<sequence length="583" mass="66076">MMSRLNSVVIKLWLTIILIVTTVLILLSIALITFMQYYFTQETENAIREDARRISSLVEQSHNKEEAIKYSQTLIENPGGLMIINNKHRQSTASLSNIKKQMLNEVVNNDHFDDVFDKGKSVTRNVTIKEKGSSQTYILLGYPTKAQKNSHSKYSGVFIYKDLKSIEDTNNAITIITIITAVIFLTITTVFAFFLSSRITKPLRRLRDQATRVSEGDYSYKPSVTTKDEIGQLSQAFNQMSTEIEEHVDALSTSKNIRDSLINSMVEGVLGINESRQIILSNKMANDIMDNIDEDAKAFLLRQIEDTFKSKQTEMRDLEMNARFFVVTTSYIDKIEQGGKSGVVVTVRDMTNEHNLDQMKKDFIANVSHELRTPISLLQGYTESIVDGIVTEPDEIKESLAIVLDESKRLNRLVNELLNVARMDAEGLSVNKEVQPIAALLDKMKIKYRQQADDLGLNMTFNYCKKRVWSYDMDRMDQVLTNLIDNASRYTKPGDEIAITCDENESEDILYIKDTGTGIAPEHLQQVFDRFYKVDAARTRGKQGTGLGLFICKMIIEEHGGSIDVKSELGKGTTFIIKLPKPE</sequence>
<comment type="function">
    <text evidence="5 7 8">Member of the two-component regulatory system SrrA/SrrB, which is involved in the global regulation of staphylococcal virulence factors in response to environmental oxygen levels as well as biofilm formation (PubMed:24222487). Also plays an essential role in host-derived nitric oxide resistance by regulating hmp/flavohemoglobin, an enzyme that detoxifies nitric oxide by converting it to nitrate (PubMed:16859493, PubMed:24222487). Functions as a sensor protein kinase which is autophosphorylated at a histidine residue and transfers its phosphate group to SrrA. In turn, SrrA binds to the upstream promoter regions of the target genes to positively and negatively regulate their expression (Probable).</text>
</comment>
<comment type="catalytic activity">
    <reaction>
        <text>ATP + protein L-histidine = ADP + protein N-phospho-L-histidine.</text>
        <dbReference type="EC" id="2.7.13.3"/>
    </reaction>
</comment>
<comment type="subcellular location">
    <subcellularLocation>
        <location evidence="1">Cell membrane</location>
        <topology evidence="1">Multi-pass membrane protein</topology>
    </subcellularLocation>
</comment>
<comment type="induction">
    <text evidence="6">Up-regulated during anaerobic growth.</text>
</comment>
<comment type="disruption phenotype">
    <text evidence="5">Inactivation significantly enhances staphylococcal nitric oxide susceptibility.</text>
</comment>
<feature type="chain" id="PRO_0000074882" description="Sensor protein SrrB">
    <location>
        <begin position="1"/>
        <end position="583"/>
    </location>
</feature>
<feature type="topological domain" description="Cytoplasmic" evidence="2">
    <location>
        <begin position="1"/>
        <end position="11"/>
    </location>
</feature>
<feature type="transmembrane region" description="Helical" evidence="2">
    <location>
        <begin position="12"/>
        <end position="32"/>
    </location>
</feature>
<feature type="topological domain" description="Extracellular" evidence="2">
    <location>
        <begin position="33"/>
        <end position="174"/>
    </location>
</feature>
<feature type="transmembrane region" description="Helical" evidence="2">
    <location>
        <begin position="175"/>
        <end position="195"/>
    </location>
</feature>
<feature type="topological domain" description="Cytoplasmic" evidence="2">
    <location>
        <begin position="196"/>
        <end position="583"/>
    </location>
</feature>
<feature type="domain" description="HAMP" evidence="3">
    <location>
        <begin position="197"/>
        <end position="249"/>
    </location>
</feature>
<feature type="domain" description="Histidine kinase" evidence="4">
    <location>
        <begin position="366"/>
        <end position="583"/>
    </location>
</feature>
<feature type="modified residue" description="Phosphohistidine; by autocatalysis" evidence="4">
    <location>
        <position position="369"/>
    </location>
</feature>